<evidence type="ECO:0000255" key="1">
    <source>
        <dbReference type="HAMAP-Rule" id="MF_03116"/>
    </source>
</evidence>
<dbReference type="EC" id="4.2.1.109" evidence="1"/>
<dbReference type="EMBL" id="CH954180">
    <property type="protein sequence ID" value="EDV47162.1"/>
    <property type="molecule type" value="Genomic_DNA"/>
</dbReference>
<dbReference type="SMR" id="B3NVZ7"/>
<dbReference type="EnsemblMetazoa" id="FBtr0137862">
    <property type="protein sequence ID" value="FBpp0136354"/>
    <property type="gene ID" value="FBgn0110029"/>
</dbReference>
<dbReference type="EnsemblMetazoa" id="XM_001978199.3">
    <property type="protein sequence ID" value="XP_001978235.1"/>
    <property type="gene ID" value="LOC6550953"/>
</dbReference>
<dbReference type="GeneID" id="6550953"/>
<dbReference type="KEGG" id="der:6550953"/>
<dbReference type="eggNOG" id="KOG2631">
    <property type="taxonomic scope" value="Eukaryota"/>
</dbReference>
<dbReference type="HOGENOM" id="CLU_006033_4_0_1"/>
<dbReference type="OMA" id="WFPGTSG"/>
<dbReference type="OrthoDB" id="191080at2759"/>
<dbReference type="PhylomeDB" id="B3NVZ7"/>
<dbReference type="UniPathway" id="UPA00904">
    <property type="reaction ID" value="UER00875"/>
</dbReference>
<dbReference type="Proteomes" id="UP000008711">
    <property type="component" value="Unassembled WGS sequence"/>
</dbReference>
<dbReference type="GO" id="GO:0005737">
    <property type="term" value="C:cytoplasm"/>
    <property type="evidence" value="ECO:0007669"/>
    <property type="project" value="UniProtKB-SubCell"/>
</dbReference>
<dbReference type="GO" id="GO:0046570">
    <property type="term" value="F:methylthioribulose 1-phosphate dehydratase activity"/>
    <property type="evidence" value="ECO:0000250"/>
    <property type="project" value="UniProtKB"/>
</dbReference>
<dbReference type="GO" id="GO:0008270">
    <property type="term" value="F:zinc ion binding"/>
    <property type="evidence" value="ECO:0000250"/>
    <property type="project" value="UniProtKB"/>
</dbReference>
<dbReference type="GO" id="GO:0019509">
    <property type="term" value="P:L-methionine salvage from methylthioadenosine"/>
    <property type="evidence" value="ECO:0007669"/>
    <property type="project" value="UniProtKB-UniRule"/>
</dbReference>
<dbReference type="FunFam" id="3.40.225.10:FF:000003">
    <property type="entry name" value="Methylthioribulose-1-phosphate dehydratase"/>
    <property type="match status" value="1"/>
</dbReference>
<dbReference type="Gene3D" id="3.40.225.10">
    <property type="entry name" value="Class II aldolase/adducin N-terminal domain"/>
    <property type="match status" value="1"/>
</dbReference>
<dbReference type="HAMAP" id="MF_03116">
    <property type="entry name" value="Salvage_MtnB_euk"/>
    <property type="match status" value="1"/>
</dbReference>
<dbReference type="InterPro" id="IPR001303">
    <property type="entry name" value="Aldolase_II/adducin_N"/>
</dbReference>
<dbReference type="InterPro" id="IPR036409">
    <property type="entry name" value="Aldolase_II/adducin_N_sf"/>
</dbReference>
<dbReference type="InterPro" id="IPR017714">
    <property type="entry name" value="MethylthioRu-1-P_deHdtase_MtnB"/>
</dbReference>
<dbReference type="InterPro" id="IPR027514">
    <property type="entry name" value="Salvage_MtnB_euk"/>
</dbReference>
<dbReference type="NCBIfam" id="TIGR03328">
    <property type="entry name" value="salvage_mtnB"/>
    <property type="match status" value="1"/>
</dbReference>
<dbReference type="PANTHER" id="PTHR10640">
    <property type="entry name" value="METHYLTHIORIBULOSE-1-PHOSPHATE DEHYDRATASE"/>
    <property type="match status" value="1"/>
</dbReference>
<dbReference type="PANTHER" id="PTHR10640:SF7">
    <property type="entry name" value="METHYLTHIORIBULOSE-1-PHOSPHATE DEHYDRATASE"/>
    <property type="match status" value="1"/>
</dbReference>
<dbReference type="Pfam" id="PF00596">
    <property type="entry name" value="Aldolase_II"/>
    <property type="match status" value="1"/>
</dbReference>
<dbReference type="SMART" id="SM01007">
    <property type="entry name" value="Aldolase_II"/>
    <property type="match status" value="1"/>
</dbReference>
<dbReference type="SUPFAM" id="SSF53639">
    <property type="entry name" value="AraD/HMP-PK domain-like"/>
    <property type="match status" value="1"/>
</dbReference>
<protein>
    <recommendedName>
        <fullName evidence="1">Probable methylthioribulose-1-phosphate dehydratase</fullName>
        <shortName evidence="1">MTRu-1-P dehydratase</shortName>
        <ecNumber evidence="1">4.2.1.109</ecNumber>
    </recommendedName>
</protein>
<organism>
    <name type="scientific">Drosophila erecta</name>
    <name type="common">Fruit fly</name>
    <dbReference type="NCBI Taxonomy" id="7220"/>
    <lineage>
        <taxon>Eukaryota</taxon>
        <taxon>Metazoa</taxon>
        <taxon>Ecdysozoa</taxon>
        <taxon>Arthropoda</taxon>
        <taxon>Hexapoda</taxon>
        <taxon>Insecta</taxon>
        <taxon>Pterygota</taxon>
        <taxon>Neoptera</taxon>
        <taxon>Endopterygota</taxon>
        <taxon>Diptera</taxon>
        <taxon>Brachycera</taxon>
        <taxon>Muscomorpha</taxon>
        <taxon>Ephydroidea</taxon>
        <taxon>Drosophilidae</taxon>
        <taxon>Drosophila</taxon>
        <taxon>Sophophora</taxon>
    </lineage>
</organism>
<feature type="chain" id="PRO_0000393781" description="Probable methylthioribulose-1-phosphate dehydratase">
    <location>
        <begin position="1"/>
        <end position="227"/>
    </location>
</feature>
<feature type="active site" description="Proton donor/acceptor" evidence="1">
    <location>
        <position position="129"/>
    </location>
</feature>
<feature type="binding site" evidence="1">
    <location>
        <position position="87"/>
    </location>
    <ligand>
        <name>substrate</name>
    </ligand>
</feature>
<feature type="binding site" evidence="1">
    <location>
        <position position="105"/>
    </location>
    <ligand>
        <name>Zn(2+)</name>
        <dbReference type="ChEBI" id="CHEBI:29105"/>
    </ligand>
</feature>
<feature type="binding site" evidence="1">
    <location>
        <position position="107"/>
    </location>
    <ligand>
        <name>Zn(2+)</name>
        <dbReference type="ChEBI" id="CHEBI:29105"/>
    </ligand>
</feature>
<feature type="binding site" evidence="1">
    <location>
        <position position="185"/>
    </location>
    <ligand>
        <name>Zn(2+)</name>
        <dbReference type="ChEBI" id="CHEBI:29105"/>
    </ligand>
</feature>
<accession>B3NVZ7</accession>
<gene>
    <name type="ORF">GG17808</name>
</gene>
<name>MTNB_DROER</name>
<proteinExistence type="inferred from homology"/>
<keyword id="KW-0028">Amino-acid biosynthesis</keyword>
<keyword id="KW-0963">Cytoplasm</keyword>
<keyword id="KW-0456">Lyase</keyword>
<keyword id="KW-0479">Metal-binding</keyword>
<keyword id="KW-0486">Methionine biosynthesis</keyword>
<keyword id="KW-0862">Zinc</keyword>
<comment type="function">
    <text evidence="1">Catalyzes the dehydration of methylthioribulose-1-phosphate (MTRu-1-P) into 2,3-diketo-5-methylthiopentyl-1-phosphate (DK-MTP-1-P).</text>
</comment>
<comment type="catalytic activity">
    <reaction evidence="1">
        <text>5-(methylsulfanyl)-D-ribulose 1-phosphate = 5-methylsulfanyl-2,3-dioxopentyl phosphate + H2O</text>
        <dbReference type="Rhea" id="RHEA:15549"/>
        <dbReference type="ChEBI" id="CHEBI:15377"/>
        <dbReference type="ChEBI" id="CHEBI:58548"/>
        <dbReference type="ChEBI" id="CHEBI:58828"/>
        <dbReference type="EC" id="4.2.1.109"/>
    </reaction>
</comment>
<comment type="cofactor">
    <cofactor evidence="1">
        <name>Zn(2+)</name>
        <dbReference type="ChEBI" id="CHEBI:29105"/>
    </cofactor>
    <text evidence="1">Binds 1 zinc ion per subunit.</text>
</comment>
<comment type="pathway">
    <text evidence="1">Amino-acid biosynthesis; L-methionine biosynthesis via salvage pathway; L-methionine from S-methyl-5-thio-alpha-D-ribose 1-phosphate: step 2/6.</text>
</comment>
<comment type="subcellular location">
    <subcellularLocation>
        <location evidence="1">Cytoplasm</location>
    </subcellularLocation>
</comment>
<comment type="similarity">
    <text evidence="1">Belongs to the aldolase class II family. MtnB subfamily.</text>
</comment>
<reference key="1">
    <citation type="journal article" date="2007" name="Nature">
        <title>Evolution of genes and genomes on the Drosophila phylogeny.</title>
        <authorList>
            <consortium name="Drosophila 12 genomes consortium"/>
        </authorList>
    </citation>
    <scope>NUCLEOTIDE SEQUENCE [LARGE SCALE GENOMIC DNA]</scope>
    <source>
        <strain>Tucson 14021-0224.01</strain>
    </source>
</reference>
<sequence length="227" mass="26010">MALSIFKDLPAEHPRHLIPSLCRQFYHLGWVTGTGGGMSIKYNDEIYIAPSGVQKERMQPEDLFVQDITGKDLQLPPEIKGLKKSQCTPLFMLAYQHRQAGAVIHTHSQHAVMATLLWPGKTFRCTHLEMIKGVYDEADKRYLRYDEELVVPIIENTPFERDLADSMYAAMMEYPGCSAILVRRHGVYVWGQNWEKAKTMSECYDYLFSIAVEMKKAGIDPQKFESS</sequence>